<feature type="chain" id="PRO_0000374762" description="Ribosomal protein uS12 methylthiotransferase RimO">
    <location>
        <begin position="1"/>
        <end position="460"/>
    </location>
</feature>
<feature type="domain" description="MTTase N-terminal" evidence="1">
    <location>
        <begin position="16"/>
        <end position="130"/>
    </location>
</feature>
<feature type="domain" description="Radical SAM core" evidence="2">
    <location>
        <begin position="150"/>
        <end position="382"/>
    </location>
</feature>
<feature type="domain" description="TRAM" evidence="1">
    <location>
        <begin position="385"/>
        <end position="455"/>
    </location>
</feature>
<feature type="binding site" evidence="1">
    <location>
        <position position="25"/>
    </location>
    <ligand>
        <name>[4Fe-4S] cluster</name>
        <dbReference type="ChEBI" id="CHEBI:49883"/>
        <label>1</label>
    </ligand>
</feature>
<feature type="binding site" evidence="1">
    <location>
        <position position="61"/>
    </location>
    <ligand>
        <name>[4Fe-4S] cluster</name>
        <dbReference type="ChEBI" id="CHEBI:49883"/>
        <label>1</label>
    </ligand>
</feature>
<feature type="binding site" evidence="1">
    <location>
        <position position="93"/>
    </location>
    <ligand>
        <name>[4Fe-4S] cluster</name>
        <dbReference type="ChEBI" id="CHEBI:49883"/>
        <label>1</label>
    </ligand>
</feature>
<feature type="binding site" evidence="1">
    <location>
        <position position="164"/>
    </location>
    <ligand>
        <name>[4Fe-4S] cluster</name>
        <dbReference type="ChEBI" id="CHEBI:49883"/>
        <label>2</label>
        <note>4Fe-4S-S-AdoMet</note>
    </ligand>
</feature>
<feature type="binding site" evidence="1">
    <location>
        <position position="168"/>
    </location>
    <ligand>
        <name>[4Fe-4S] cluster</name>
        <dbReference type="ChEBI" id="CHEBI:49883"/>
        <label>2</label>
        <note>4Fe-4S-S-AdoMet</note>
    </ligand>
</feature>
<feature type="binding site" evidence="1">
    <location>
        <position position="171"/>
    </location>
    <ligand>
        <name>[4Fe-4S] cluster</name>
        <dbReference type="ChEBI" id="CHEBI:49883"/>
        <label>2</label>
        <note>4Fe-4S-S-AdoMet</note>
    </ligand>
</feature>
<organism>
    <name type="scientific">Chlamydia caviae (strain ATCC VR-813 / DSM 19441 / 03DC25 / GPIC)</name>
    <name type="common">Chlamydophila caviae</name>
    <dbReference type="NCBI Taxonomy" id="227941"/>
    <lineage>
        <taxon>Bacteria</taxon>
        <taxon>Pseudomonadati</taxon>
        <taxon>Chlamydiota</taxon>
        <taxon>Chlamydiia</taxon>
        <taxon>Chlamydiales</taxon>
        <taxon>Chlamydiaceae</taxon>
        <taxon>Chlamydia/Chlamydophila group</taxon>
        <taxon>Chlamydia</taxon>
    </lineage>
</organism>
<gene>
    <name evidence="1" type="primary">rimO</name>
    <name type="ordered locus">CCA_00526</name>
</gene>
<sequence>MSTKEQVFFKQATSKNKIHFISLGCSRNLVDSEVMLGILLKAGYEATETLEEADYLILNTCAFLKAARDESKDYLQRIIKAKKESAKIILTGCMVSKHKEELKPWLPYIHYVLGSGDVEHILSAIESKEAGEKLTSKSYLEMGEIPRKLSTPKHYAYLKIAEGCRKRCAFCIIPTIKGGLRSKSLDQIIKEFRLLLKMGVKEIILIAQDLGDYGKDLSADRKSCLDSVLKEMLKEPGDYWIRMLYLYPDEVDDTIIDLMESDPRLLPYVDIPLQHINNRVLKSMLRTTSKEQILDLLTKLRTRIPHIYIRSSFIVGFPGETDEEFQDLVDFVSEGWIDNLGIFSYSQEEGSVAANMADQISQSVKSKRLKILSQTQKKNVEKHNKQLVGQIVEAVIDGYHPDSELLLTARFYGQAPEVDPCIIVNEARLVSGFGERYLIEITGYVGYDLVGRVIKKVPGE</sequence>
<dbReference type="EC" id="2.8.4.4" evidence="1"/>
<dbReference type="EMBL" id="AE015925">
    <property type="protein sequence ID" value="AAP05269.1"/>
    <property type="molecule type" value="Genomic_DNA"/>
</dbReference>
<dbReference type="RefSeq" id="WP_011006485.1">
    <property type="nucleotide sequence ID" value="NC_003361.3"/>
</dbReference>
<dbReference type="SMR" id="Q823A0"/>
<dbReference type="STRING" id="227941.CCA_00526"/>
<dbReference type="KEGG" id="cca:CCA_00526"/>
<dbReference type="eggNOG" id="COG0621">
    <property type="taxonomic scope" value="Bacteria"/>
</dbReference>
<dbReference type="HOGENOM" id="CLU_018697_0_1_0"/>
<dbReference type="OrthoDB" id="9805215at2"/>
<dbReference type="Proteomes" id="UP000002193">
    <property type="component" value="Chromosome"/>
</dbReference>
<dbReference type="GO" id="GO:0005829">
    <property type="term" value="C:cytosol"/>
    <property type="evidence" value="ECO:0007669"/>
    <property type="project" value="TreeGrafter"/>
</dbReference>
<dbReference type="GO" id="GO:0051539">
    <property type="term" value="F:4 iron, 4 sulfur cluster binding"/>
    <property type="evidence" value="ECO:0007669"/>
    <property type="project" value="UniProtKB-UniRule"/>
</dbReference>
<dbReference type="GO" id="GO:0035599">
    <property type="term" value="F:aspartic acid methylthiotransferase activity"/>
    <property type="evidence" value="ECO:0007669"/>
    <property type="project" value="TreeGrafter"/>
</dbReference>
<dbReference type="GO" id="GO:0046872">
    <property type="term" value="F:metal ion binding"/>
    <property type="evidence" value="ECO:0007669"/>
    <property type="project" value="UniProtKB-KW"/>
</dbReference>
<dbReference type="GO" id="GO:0103039">
    <property type="term" value="F:protein methylthiotransferase activity"/>
    <property type="evidence" value="ECO:0007669"/>
    <property type="project" value="UniProtKB-EC"/>
</dbReference>
<dbReference type="GO" id="GO:0006400">
    <property type="term" value="P:tRNA modification"/>
    <property type="evidence" value="ECO:0007669"/>
    <property type="project" value="InterPro"/>
</dbReference>
<dbReference type="CDD" id="cd01335">
    <property type="entry name" value="Radical_SAM"/>
    <property type="match status" value="1"/>
</dbReference>
<dbReference type="FunFam" id="3.80.30.20:FF:000001">
    <property type="entry name" value="tRNA-2-methylthio-N(6)-dimethylallyladenosine synthase 2"/>
    <property type="match status" value="1"/>
</dbReference>
<dbReference type="Gene3D" id="3.40.50.12160">
    <property type="entry name" value="Methylthiotransferase, N-terminal domain"/>
    <property type="match status" value="1"/>
</dbReference>
<dbReference type="Gene3D" id="2.40.50.140">
    <property type="entry name" value="Nucleic acid-binding proteins"/>
    <property type="match status" value="1"/>
</dbReference>
<dbReference type="Gene3D" id="3.80.30.20">
    <property type="entry name" value="tm_1862 like domain"/>
    <property type="match status" value="1"/>
</dbReference>
<dbReference type="HAMAP" id="MF_01865">
    <property type="entry name" value="MTTase_RimO"/>
    <property type="match status" value="1"/>
</dbReference>
<dbReference type="InterPro" id="IPR006638">
    <property type="entry name" value="Elp3/MiaA/NifB-like_rSAM"/>
</dbReference>
<dbReference type="InterPro" id="IPR005839">
    <property type="entry name" value="Methylthiotransferase"/>
</dbReference>
<dbReference type="InterPro" id="IPR020612">
    <property type="entry name" value="Methylthiotransferase_CS"/>
</dbReference>
<dbReference type="InterPro" id="IPR013848">
    <property type="entry name" value="Methylthiotransferase_N"/>
</dbReference>
<dbReference type="InterPro" id="IPR038135">
    <property type="entry name" value="Methylthiotransferase_N_sf"/>
</dbReference>
<dbReference type="InterPro" id="IPR012340">
    <property type="entry name" value="NA-bd_OB-fold"/>
</dbReference>
<dbReference type="InterPro" id="IPR005840">
    <property type="entry name" value="Ribosomal_uS12_MeSTrfase_RimO"/>
</dbReference>
<dbReference type="InterPro" id="IPR007197">
    <property type="entry name" value="rSAM"/>
</dbReference>
<dbReference type="InterPro" id="IPR023404">
    <property type="entry name" value="rSAM_horseshoe"/>
</dbReference>
<dbReference type="InterPro" id="IPR002792">
    <property type="entry name" value="TRAM_dom"/>
</dbReference>
<dbReference type="NCBIfam" id="TIGR01125">
    <property type="entry name" value="30S ribosomal protein S12 methylthiotransferase RimO"/>
    <property type="match status" value="1"/>
</dbReference>
<dbReference type="NCBIfam" id="TIGR00089">
    <property type="entry name" value="MiaB/RimO family radical SAM methylthiotransferase"/>
    <property type="match status" value="1"/>
</dbReference>
<dbReference type="PANTHER" id="PTHR43837">
    <property type="entry name" value="RIBOSOMAL PROTEIN S12 METHYLTHIOTRANSFERASE RIMO"/>
    <property type="match status" value="1"/>
</dbReference>
<dbReference type="PANTHER" id="PTHR43837:SF1">
    <property type="entry name" value="RIBOSOMAL PROTEIN US12 METHYLTHIOTRANSFERASE RIMO"/>
    <property type="match status" value="1"/>
</dbReference>
<dbReference type="Pfam" id="PF04055">
    <property type="entry name" value="Radical_SAM"/>
    <property type="match status" value="1"/>
</dbReference>
<dbReference type="Pfam" id="PF18693">
    <property type="entry name" value="TRAM_2"/>
    <property type="match status" value="1"/>
</dbReference>
<dbReference type="Pfam" id="PF00919">
    <property type="entry name" value="UPF0004"/>
    <property type="match status" value="1"/>
</dbReference>
<dbReference type="SFLD" id="SFLDG01082">
    <property type="entry name" value="B12-binding_domain_containing"/>
    <property type="match status" value="1"/>
</dbReference>
<dbReference type="SFLD" id="SFLDG01061">
    <property type="entry name" value="methylthiotransferase"/>
    <property type="match status" value="1"/>
</dbReference>
<dbReference type="SFLD" id="SFLDF00274">
    <property type="entry name" value="ribosomal_protein_S12_methylth"/>
    <property type="match status" value="1"/>
</dbReference>
<dbReference type="SMART" id="SM00729">
    <property type="entry name" value="Elp3"/>
    <property type="match status" value="1"/>
</dbReference>
<dbReference type="SUPFAM" id="SSF102114">
    <property type="entry name" value="Radical SAM enzymes"/>
    <property type="match status" value="1"/>
</dbReference>
<dbReference type="PROSITE" id="PS51449">
    <property type="entry name" value="MTTASE_N"/>
    <property type="match status" value="1"/>
</dbReference>
<dbReference type="PROSITE" id="PS01278">
    <property type="entry name" value="MTTASE_RADICAL"/>
    <property type="match status" value="1"/>
</dbReference>
<dbReference type="PROSITE" id="PS51918">
    <property type="entry name" value="RADICAL_SAM"/>
    <property type="match status" value="1"/>
</dbReference>
<protein>
    <recommendedName>
        <fullName evidence="1">Ribosomal protein uS12 methylthiotransferase RimO</fullName>
        <shortName evidence="1">uS12 MTTase</shortName>
        <shortName evidence="1">uS12 methylthiotransferase</shortName>
        <ecNumber evidence="1">2.8.4.4</ecNumber>
    </recommendedName>
    <alternativeName>
        <fullName evidence="1">Ribosomal protein uS12 (aspartate-C(3))-methylthiotransferase</fullName>
    </alternativeName>
    <alternativeName>
        <fullName evidence="1">Ribosome maturation factor RimO</fullName>
    </alternativeName>
</protein>
<accession>Q823A0</accession>
<reference key="1">
    <citation type="journal article" date="2003" name="Nucleic Acids Res.">
        <title>Genome sequence of Chlamydophila caviae (Chlamydia psittaci GPIC): examining the role of niche-specific genes in the evolution of the Chlamydiaceae.</title>
        <authorList>
            <person name="Read T.D."/>
            <person name="Myers G.S.A."/>
            <person name="Brunham R.C."/>
            <person name="Nelson W.C."/>
            <person name="Paulsen I.T."/>
            <person name="Heidelberg J.F."/>
            <person name="Holtzapple E.K."/>
            <person name="Khouri H.M."/>
            <person name="Federova N.B."/>
            <person name="Carty H.A."/>
            <person name="Umayam L.A."/>
            <person name="Haft D.H."/>
            <person name="Peterson J.D."/>
            <person name="Beanan M.J."/>
            <person name="White O."/>
            <person name="Salzberg S.L."/>
            <person name="Hsia R.-C."/>
            <person name="McClarty G."/>
            <person name="Rank R.G."/>
            <person name="Bavoil P.M."/>
            <person name="Fraser C.M."/>
        </authorList>
    </citation>
    <scope>NUCLEOTIDE SEQUENCE [LARGE SCALE GENOMIC DNA]</scope>
    <source>
        <strain>ATCC VR-813 / DSM 19441 / 03DC25 / GPIC</strain>
    </source>
</reference>
<keyword id="KW-0004">4Fe-4S</keyword>
<keyword id="KW-0963">Cytoplasm</keyword>
<keyword id="KW-0408">Iron</keyword>
<keyword id="KW-0411">Iron-sulfur</keyword>
<keyword id="KW-0479">Metal-binding</keyword>
<keyword id="KW-0949">S-adenosyl-L-methionine</keyword>
<keyword id="KW-0808">Transferase</keyword>
<name>RIMO_CHLCV</name>
<evidence type="ECO:0000255" key="1">
    <source>
        <dbReference type="HAMAP-Rule" id="MF_01865"/>
    </source>
</evidence>
<evidence type="ECO:0000255" key="2">
    <source>
        <dbReference type="PROSITE-ProRule" id="PRU01266"/>
    </source>
</evidence>
<proteinExistence type="inferred from homology"/>
<comment type="function">
    <text evidence="1">Catalyzes the methylthiolation of an aspartic acid residue of ribosomal protein uS12.</text>
</comment>
<comment type="catalytic activity">
    <reaction evidence="1">
        <text>L-aspartate(89)-[ribosomal protein uS12]-hydrogen + (sulfur carrier)-SH + AH2 + 2 S-adenosyl-L-methionine = 3-methylsulfanyl-L-aspartate(89)-[ribosomal protein uS12]-hydrogen + (sulfur carrier)-H + 5'-deoxyadenosine + L-methionine + A + S-adenosyl-L-homocysteine + 2 H(+)</text>
        <dbReference type="Rhea" id="RHEA:37087"/>
        <dbReference type="Rhea" id="RHEA-COMP:10460"/>
        <dbReference type="Rhea" id="RHEA-COMP:10461"/>
        <dbReference type="Rhea" id="RHEA-COMP:14737"/>
        <dbReference type="Rhea" id="RHEA-COMP:14739"/>
        <dbReference type="ChEBI" id="CHEBI:13193"/>
        <dbReference type="ChEBI" id="CHEBI:15378"/>
        <dbReference type="ChEBI" id="CHEBI:17319"/>
        <dbReference type="ChEBI" id="CHEBI:17499"/>
        <dbReference type="ChEBI" id="CHEBI:29917"/>
        <dbReference type="ChEBI" id="CHEBI:29961"/>
        <dbReference type="ChEBI" id="CHEBI:57844"/>
        <dbReference type="ChEBI" id="CHEBI:57856"/>
        <dbReference type="ChEBI" id="CHEBI:59789"/>
        <dbReference type="ChEBI" id="CHEBI:64428"/>
        <dbReference type="ChEBI" id="CHEBI:73599"/>
        <dbReference type="EC" id="2.8.4.4"/>
    </reaction>
</comment>
<comment type="cofactor">
    <cofactor evidence="1">
        <name>[4Fe-4S] cluster</name>
        <dbReference type="ChEBI" id="CHEBI:49883"/>
    </cofactor>
    <text evidence="1">Binds 2 [4Fe-4S] clusters. One cluster is coordinated with 3 cysteines and an exchangeable S-adenosyl-L-methionine.</text>
</comment>
<comment type="subcellular location">
    <subcellularLocation>
        <location evidence="1">Cytoplasm</location>
    </subcellularLocation>
</comment>
<comment type="similarity">
    <text evidence="1">Belongs to the methylthiotransferase family. RimO subfamily.</text>
</comment>